<organism>
    <name type="scientific">Synechococcus sp. (strain CC9311)</name>
    <dbReference type="NCBI Taxonomy" id="64471"/>
    <lineage>
        <taxon>Bacteria</taxon>
        <taxon>Bacillati</taxon>
        <taxon>Cyanobacteriota</taxon>
        <taxon>Cyanophyceae</taxon>
        <taxon>Synechococcales</taxon>
        <taxon>Synechococcaceae</taxon>
        <taxon>Synechococcus</taxon>
    </lineage>
</organism>
<accession>Q0IAH7</accession>
<gene>
    <name evidence="1" type="primary">rpmG</name>
    <name evidence="1" type="synonym">rpl33</name>
    <name type="ordered locus">sync_1338</name>
</gene>
<dbReference type="EMBL" id="CP000435">
    <property type="protein sequence ID" value="ABI46357.1"/>
    <property type="molecule type" value="Genomic_DNA"/>
</dbReference>
<dbReference type="RefSeq" id="WP_011619264.1">
    <property type="nucleotide sequence ID" value="NC_008319.1"/>
</dbReference>
<dbReference type="SMR" id="Q0IAH7"/>
<dbReference type="STRING" id="64471.sync_1338"/>
<dbReference type="KEGG" id="syg:sync_1338"/>
<dbReference type="eggNOG" id="COG0267">
    <property type="taxonomic scope" value="Bacteria"/>
</dbReference>
<dbReference type="HOGENOM" id="CLU_190949_3_0_3"/>
<dbReference type="OrthoDB" id="9801333at2"/>
<dbReference type="Proteomes" id="UP000001961">
    <property type="component" value="Chromosome"/>
</dbReference>
<dbReference type="GO" id="GO:0005737">
    <property type="term" value="C:cytoplasm"/>
    <property type="evidence" value="ECO:0007669"/>
    <property type="project" value="UniProtKB-ARBA"/>
</dbReference>
<dbReference type="GO" id="GO:1990904">
    <property type="term" value="C:ribonucleoprotein complex"/>
    <property type="evidence" value="ECO:0007669"/>
    <property type="project" value="UniProtKB-KW"/>
</dbReference>
<dbReference type="GO" id="GO:0005840">
    <property type="term" value="C:ribosome"/>
    <property type="evidence" value="ECO:0007669"/>
    <property type="project" value="UniProtKB-KW"/>
</dbReference>
<dbReference type="GO" id="GO:0003735">
    <property type="term" value="F:structural constituent of ribosome"/>
    <property type="evidence" value="ECO:0007669"/>
    <property type="project" value="InterPro"/>
</dbReference>
<dbReference type="GO" id="GO:0006412">
    <property type="term" value="P:translation"/>
    <property type="evidence" value="ECO:0007669"/>
    <property type="project" value="UniProtKB-UniRule"/>
</dbReference>
<dbReference type="Gene3D" id="2.20.28.120">
    <property type="entry name" value="Ribosomal protein L33"/>
    <property type="match status" value="1"/>
</dbReference>
<dbReference type="HAMAP" id="MF_00294">
    <property type="entry name" value="Ribosomal_bL33"/>
    <property type="match status" value="1"/>
</dbReference>
<dbReference type="InterPro" id="IPR001705">
    <property type="entry name" value="Ribosomal_bL33"/>
</dbReference>
<dbReference type="InterPro" id="IPR018264">
    <property type="entry name" value="Ribosomal_bL33_CS"/>
</dbReference>
<dbReference type="InterPro" id="IPR038584">
    <property type="entry name" value="Ribosomal_bL33_sf"/>
</dbReference>
<dbReference type="InterPro" id="IPR011332">
    <property type="entry name" value="Ribosomal_zn-bd"/>
</dbReference>
<dbReference type="NCBIfam" id="NF001764">
    <property type="entry name" value="PRK00504.1"/>
    <property type="match status" value="1"/>
</dbReference>
<dbReference type="NCBIfam" id="NF001860">
    <property type="entry name" value="PRK00595.1"/>
    <property type="match status" value="1"/>
</dbReference>
<dbReference type="NCBIfam" id="TIGR01023">
    <property type="entry name" value="rpmG_bact"/>
    <property type="match status" value="1"/>
</dbReference>
<dbReference type="PANTHER" id="PTHR43168">
    <property type="entry name" value="50S RIBOSOMAL PROTEIN L33, CHLOROPLASTIC"/>
    <property type="match status" value="1"/>
</dbReference>
<dbReference type="PANTHER" id="PTHR43168:SF2">
    <property type="entry name" value="LARGE RIBOSOMAL SUBUNIT PROTEIN BL33C"/>
    <property type="match status" value="1"/>
</dbReference>
<dbReference type="Pfam" id="PF00471">
    <property type="entry name" value="Ribosomal_L33"/>
    <property type="match status" value="1"/>
</dbReference>
<dbReference type="SUPFAM" id="SSF57829">
    <property type="entry name" value="Zn-binding ribosomal proteins"/>
    <property type="match status" value="1"/>
</dbReference>
<dbReference type="PROSITE" id="PS00582">
    <property type="entry name" value="RIBOSOMAL_L33"/>
    <property type="match status" value="1"/>
</dbReference>
<comment type="similarity">
    <text evidence="1">Belongs to the bacterial ribosomal protein bL33 family.</text>
</comment>
<reference key="1">
    <citation type="journal article" date="2006" name="Proc. Natl. Acad. Sci. U.S.A.">
        <title>Genome sequence of Synechococcus CC9311: insights into adaptation to a coastal environment.</title>
        <authorList>
            <person name="Palenik B."/>
            <person name="Ren Q."/>
            <person name="Dupont C.L."/>
            <person name="Myers G.S."/>
            <person name="Heidelberg J.F."/>
            <person name="Badger J.H."/>
            <person name="Madupu R."/>
            <person name="Nelson W.C."/>
            <person name="Brinkac L.M."/>
            <person name="Dodson R.J."/>
            <person name="Durkin A.S."/>
            <person name="Daugherty S.C."/>
            <person name="Sullivan S.A."/>
            <person name="Khouri H."/>
            <person name="Mohamoud Y."/>
            <person name="Halpin R."/>
            <person name="Paulsen I.T."/>
        </authorList>
    </citation>
    <scope>NUCLEOTIDE SEQUENCE [LARGE SCALE GENOMIC DNA]</scope>
    <source>
        <strain>CC9311</strain>
    </source>
</reference>
<proteinExistence type="inferred from homology"/>
<name>RL33_SYNS3</name>
<sequence length="66" mass="7643">MAKNKGVRIVITLECTECRSASASEKRSPGVSRYTTEKNRRNTTERLEIMKFCPQLNKMTLHKEIK</sequence>
<keyword id="KW-1185">Reference proteome</keyword>
<keyword id="KW-0687">Ribonucleoprotein</keyword>
<keyword id="KW-0689">Ribosomal protein</keyword>
<protein>
    <recommendedName>
        <fullName evidence="1">Large ribosomal subunit protein bL33</fullName>
    </recommendedName>
    <alternativeName>
        <fullName evidence="2">50S ribosomal protein L33</fullName>
    </alternativeName>
</protein>
<feature type="chain" id="PRO_1000004204" description="Large ribosomal subunit protein bL33">
    <location>
        <begin position="1"/>
        <end position="66"/>
    </location>
</feature>
<evidence type="ECO:0000255" key="1">
    <source>
        <dbReference type="HAMAP-Rule" id="MF_00294"/>
    </source>
</evidence>
<evidence type="ECO:0000305" key="2"/>